<evidence type="ECO:0000255" key="1">
    <source>
        <dbReference type="HAMAP-Rule" id="MF_00517"/>
    </source>
</evidence>
<keyword id="KW-0997">Cell inner membrane</keyword>
<keyword id="KW-1003">Cell membrane</keyword>
<keyword id="KW-0472">Membrane</keyword>
<keyword id="KW-0762">Sugar transport</keyword>
<keyword id="KW-0812">Transmembrane</keyword>
<keyword id="KW-1133">Transmembrane helix</keyword>
<keyword id="KW-0813">Transport</keyword>
<comment type="function">
    <text evidence="1">Involved in the efflux of sugars. The physiological role may be the reduction of the intracellular concentration of toxic sugars or sugar metabolites.</text>
</comment>
<comment type="subcellular location">
    <subcellularLocation>
        <location evidence="1">Cell inner membrane</location>
        <topology evidence="1">Multi-pass membrane protein</topology>
    </subcellularLocation>
</comment>
<comment type="similarity">
    <text evidence="1">Belongs to the major facilitator superfamily. SotB (TC 2.A.1.2) family.</text>
</comment>
<dbReference type="EMBL" id="CP001396">
    <property type="protein sequence ID" value="ACR64165.1"/>
    <property type="molecule type" value="Genomic_DNA"/>
</dbReference>
<dbReference type="SMR" id="C4ZWU5"/>
<dbReference type="KEGG" id="ebw:BWG_1347"/>
<dbReference type="HOGENOM" id="CLU_001265_61_1_6"/>
<dbReference type="GO" id="GO:0005886">
    <property type="term" value="C:plasma membrane"/>
    <property type="evidence" value="ECO:0007669"/>
    <property type="project" value="UniProtKB-SubCell"/>
</dbReference>
<dbReference type="GO" id="GO:0015144">
    <property type="term" value="F:carbohydrate transmembrane transporter activity"/>
    <property type="evidence" value="ECO:0007669"/>
    <property type="project" value="UniProtKB-UniRule"/>
</dbReference>
<dbReference type="CDD" id="cd17324">
    <property type="entry name" value="MFS_NepI_like"/>
    <property type="match status" value="1"/>
</dbReference>
<dbReference type="FunFam" id="1.20.1250.20:FF:000079">
    <property type="entry name" value="Probable sugar efflux transporter"/>
    <property type="match status" value="1"/>
</dbReference>
<dbReference type="Gene3D" id="1.20.1250.20">
    <property type="entry name" value="MFS general substrate transporter like domains"/>
    <property type="match status" value="1"/>
</dbReference>
<dbReference type="HAMAP" id="MF_00517">
    <property type="entry name" value="MFS_SotB"/>
    <property type="match status" value="1"/>
</dbReference>
<dbReference type="InterPro" id="IPR011701">
    <property type="entry name" value="MFS"/>
</dbReference>
<dbReference type="InterPro" id="IPR020846">
    <property type="entry name" value="MFS_dom"/>
</dbReference>
<dbReference type="InterPro" id="IPR050189">
    <property type="entry name" value="MFS_Efflux_Transporters"/>
</dbReference>
<dbReference type="InterPro" id="IPR036259">
    <property type="entry name" value="MFS_trans_sf"/>
</dbReference>
<dbReference type="InterPro" id="IPR023495">
    <property type="entry name" value="Sugar_effux_transptr_put"/>
</dbReference>
<dbReference type="NCBIfam" id="NF002921">
    <property type="entry name" value="PRK03545.1"/>
    <property type="match status" value="1"/>
</dbReference>
<dbReference type="PANTHER" id="PTHR43124">
    <property type="entry name" value="PURINE EFFLUX PUMP PBUE"/>
    <property type="match status" value="1"/>
</dbReference>
<dbReference type="PANTHER" id="PTHR43124:SF4">
    <property type="entry name" value="SUGAR EFFLUX TRANSPORTER"/>
    <property type="match status" value="1"/>
</dbReference>
<dbReference type="Pfam" id="PF07690">
    <property type="entry name" value="MFS_1"/>
    <property type="match status" value="1"/>
</dbReference>
<dbReference type="SUPFAM" id="SSF103473">
    <property type="entry name" value="MFS general substrate transporter"/>
    <property type="match status" value="1"/>
</dbReference>
<dbReference type="PROSITE" id="PS50850">
    <property type="entry name" value="MFS"/>
    <property type="match status" value="1"/>
</dbReference>
<sequence length="396" mass="42538">MTTNTVSRKVAWLRVVTLAVAAFIFNTTEFVPVGLLSDIAQSFHMQTAQVGIMLTIYAWVVALMSLPFMLMTSQVERRKLLICLFVVFIASHVLSFLSWSFTVLVISRIGVAFAHAIFWSITASLAIRMAPAGKRAQALSLIATGTALAMVLGLPLGRIVGQYFGWRMTFFAIGIGALITLLCLIKLLPLLPSEHSGSLKSLPLLFRRPALMSIYLLTVVVVTAHYTAYSYIEPFVQNIAGFSANFATALLLLLGGAGIIGSVIFGKLGNQYASALVSTAIALLLVCLALLLPAANSEIHLGVLSIFWGIAMMIIGLGMQVKVLALAPDATDVAMALFSGIFNIGIGAGALVGNQVSLHWSMSMIGYVGAVPAFAALIWSIIIFRRWPVTLEEQTQ</sequence>
<feature type="chain" id="PRO_1000211718" description="Probable sugar efflux transporter">
    <location>
        <begin position="1"/>
        <end position="396"/>
    </location>
</feature>
<feature type="transmembrane region" description="Helical" evidence="1">
    <location>
        <begin position="15"/>
        <end position="35"/>
    </location>
</feature>
<feature type="transmembrane region" description="Helical" evidence="1">
    <location>
        <begin position="50"/>
        <end position="70"/>
    </location>
</feature>
<feature type="transmembrane region" description="Helical" evidence="1">
    <location>
        <begin position="81"/>
        <end position="101"/>
    </location>
</feature>
<feature type="transmembrane region" description="Helical" evidence="1">
    <location>
        <begin position="103"/>
        <end position="123"/>
    </location>
</feature>
<feature type="transmembrane region" description="Helical" evidence="1">
    <location>
        <begin position="136"/>
        <end position="156"/>
    </location>
</feature>
<feature type="transmembrane region" description="Helical" evidence="1">
    <location>
        <begin position="170"/>
        <end position="190"/>
    </location>
</feature>
<feature type="transmembrane region" description="Helical" evidence="1">
    <location>
        <begin position="209"/>
        <end position="229"/>
    </location>
</feature>
<feature type="transmembrane region" description="Helical" evidence="1">
    <location>
        <begin position="246"/>
        <end position="266"/>
    </location>
</feature>
<feature type="transmembrane region" description="Helical" evidence="1">
    <location>
        <begin position="275"/>
        <end position="295"/>
    </location>
</feature>
<feature type="transmembrane region" description="Helical" evidence="1">
    <location>
        <begin position="299"/>
        <end position="319"/>
    </location>
</feature>
<feature type="transmembrane region" description="Helical" evidence="1">
    <location>
        <begin position="333"/>
        <end position="353"/>
    </location>
</feature>
<feature type="transmembrane region" description="Helical" evidence="1">
    <location>
        <begin position="364"/>
        <end position="384"/>
    </location>
</feature>
<reference key="1">
    <citation type="journal article" date="2009" name="J. Bacteriol.">
        <title>Genomic sequencing reveals regulatory mutations and recombinational events in the widely used MC4100 lineage of Escherichia coli K-12.</title>
        <authorList>
            <person name="Ferenci T."/>
            <person name="Zhou Z."/>
            <person name="Betteridge T."/>
            <person name="Ren Y."/>
            <person name="Liu Y."/>
            <person name="Feng L."/>
            <person name="Reeves P.R."/>
            <person name="Wang L."/>
        </authorList>
    </citation>
    <scope>NUCLEOTIDE SEQUENCE [LARGE SCALE GENOMIC DNA]</scope>
    <source>
        <strain>K12 / MC4100 / BW2952</strain>
    </source>
</reference>
<accession>C4ZWU5</accession>
<gene>
    <name evidence="1" type="primary">sotB</name>
    <name type="ordered locus">BWG_1347</name>
</gene>
<name>SOTB_ECOBW</name>
<protein>
    <recommendedName>
        <fullName evidence="1">Probable sugar efflux transporter</fullName>
    </recommendedName>
</protein>
<proteinExistence type="inferred from homology"/>
<organism>
    <name type="scientific">Escherichia coli (strain K12 / MC4100 / BW2952)</name>
    <dbReference type="NCBI Taxonomy" id="595496"/>
    <lineage>
        <taxon>Bacteria</taxon>
        <taxon>Pseudomonadati</taxon>
        <taxon>Pseudomonadota</taxon>
        <taxon>Gammaproteobacteria</taxon>
        <taxon>Enterobacterales</taxon>
        <taxon>Enterobacteriaceae</taxon>
        <taxon>Escherichia</taxon>
    </lineage>
</organism>